<dbReference type="EC" id="4.2.1.20" evidence="1"/>
<dbReference type="EMBL" id="CP000931">
    <property type="protein sequence ID" value="ABZ76220.1"/>
    <property type="molecule type" value="Genomic_DNA"/>
</dbReference>
<dbReference type="RefSeq" id="WP_012276758.1">
    <property type="nucleotide sequence ID" value="NC_010334.1"/>
</dbReference>
<dbReference type="SMR" id="B0TP63"/>
<dbReference type="STRING" id="458817.Shal_1654"/>
<dbReference type="KEGG" id="shl:Shal_1654"/>
<dbReference type="eggNOG" id="COG0133">
    <property type="taxonomic scope" value="Bacteria"/>
</dbReference>
<dbReference type="HOGENOM" id="CLU_016734_3_1_6"/>
<dbReference type="OrthoDB" id="9766131at2"/>
<dbReference type="UniPathway" id="UPA00035">
    <property type="reaction ID" value="UER00044"/>
</dbReference>
<dbReference type="Proteomes" id="UP000001317">
    <property type="component" value="Chromosome"/>
</dbReference>
<dbReference type="GO" id="GO:0005737">
    <property type="term" value="C:cytoplasm"/>
    <property type="evidence" value="ECO:0007669"/>
    <property type="project" value="TreeGrafter"/>
</dbReference>
<dbReference type="GO" id="GO:0004834">
    <property type="term" value="F:tryptophan synthase activity"/>
    <property type="evidence" value="ECO:0007669"/>
    <property type="project" value="UniProtKB-UniRule"/>
</dbReference>
<dbReference type="CDD" id="cd06446">
    <property type="entry name" value="Trp-synth_B"/>
    <property type="match status" value="1"/>
</dbReference>
<dbReference type="FunFam" id="3.40.50.1100:FF:000001">
    <property type="entry name" value="Tryptophan synthase beta chain"/>
    <property type="match status" value="1"/>
</dbReference>
<dbReference type="FunFam" id="3.40.50.1100:FF:000004">
    <property type="entry name" value="Tryptophan synthase beta chain"/>
    <property type="match status" value="1"/>
</dbReference>
<dbReference type="Gene3D" id="3.40.50.1100">
    <property type="match status" value="2"/>
</dbReference>
<dbReference type="HAMAP" id="MF_00133">
    <property type="entry name" value="Trp_synth_beta"/>
    <property type="match status" value="1"/>
</dbReference>
<dbReference type="InterPro" id="IPR006653">
    <property type="entry name" value="Trp_synth_b_CS"/>
</dbReference>
<dbReference type="InterPro" id="IPR006654">
    <property type="entry name" value="Trp_synth_beta"/>
</dbReference>
<dbReference type="InterPro" id="IPR023026">
    <property type="entry name" value="Trp_synth_beta/beta-like"/>
</dbReference>
<dbReference type="InterPro" id="IPR001926">
    <property type="entry name" value="TrpB-like_PALP"/>
</dbReference>
<dbReference type="InterPro" id="IPR036052">
    <property type="entry name" value="TrpB-like_PALP_sf"/>
</dbReference>
<dbReference type="NCBIfam" id="TIGR00263">
    <property type="entry name" value="trpB"/>
    <property type="match status" value="1"/>
</dbReference>
<dbReference type="PANTHER" id="PTHR48077:SF3">
    <property type="entry name" value="TRYPTOPHAN SYNTHASE"/>
    <property type="match status" value="1"/>
</dbReference>
<dbReference type="PANTHER" id="PTHR48077">
    <property type="entry name" value="TRYPTOPHAN SYNTHASE-RELATED"/>
    <property type="match status" value="1"/>
</dbReference>
<dbReference type="Pfam" id="PF00291">
    <property type="entry name" value="PALP"/>
    <property type="match status" value="1"/>
</dbReference>
<dbReference type="PIRSF" id="PIRSF001413">
    <property type="entry name" value="Trp_syn_beta"/>
    <property type="match status" value="1"/>
</dbReference>
<dbReference type="SUPFAM" id="SSF53686">
    <property type="entry name" value="Tryptophan synthase beta subunit-like PLP-dependent enzymes"/>
    <property type="match status" value="1"/>
</dbReference>
<dbReference type="PROSITE" id="PS00168">
    <property type="entry name" value="TRP_SYNTHASE_BETA"/>
    <property type="match status" value="1"/>
</dbReference>
<keyword id="KW-0028">Amino-acid biosynthesis</keyword>
<keyword id="KW-0057">Aromatic amino acid biosynthesis</keyword>
<keyword id="KW-0456">Lyase</keyword>
<keyword id="KW-0663">Pyridoxal phosphate</keyword>
<keyword id="KW-0822">Tryptophan biosynthesis</keyword>
<evidence type="ECO:0000255" key="1">
    <source>
        <dbReference type="HAMAP-Rule" id="MF_00133"/>
    </source>
</evidence>
<evidence type="ECO:0000256" key="2">
    <source>
        <dbReference type="SAM" id="MobiDB-lite"/>
    </source>
</evidence>
<proteinExistence type="inferred from homology"/>
<organism>
    <name type="scientific">Shewanella halifaxensis (strain HAW-EB4)</name>
    <dbReference type="NCBI Taxonomy" id="458817"/>
    <lineage>
        <taxon>Bacteria</taxon>
        <taxon>Pseudomonadati</taxon>
        <taxon>Pseudomonadota</taxon>
        <taxon>Gammaproteobacteria</taxon>
        <taxon>Alteromonadales</taxon>
        <taxon>Shewanellaceae</taxon>
        <taxon>Shewanella</taxon>
    </lineage>
</organism>
<comment type="function">
    <text evidence="1">The beta subunit is responsible for the synthesis of L-tryptophan from indole and L-serine.</text>
</comment>
<comment type="catalytic activity">
    <reaction evidence="1">
        <text>(1S,2R)-1-C-(indol-3-yl)glycerol 3-phosphate + L-serine = D-glyceraldehyde 3-phosphate + L-tryptophan + H2O</text>
        <dbReference type="Rhea" id="RHEA:10532"/>
        <dbReference type="ChEBI" id="CHEBI:15377"/>
        <dbReference type="ChEBI" id="CHEBI:33384"/>
        <dbReference type="ChEBI" id="CHEBI:57912"/>
        <dbReference type="ChEBI" id="CHEBI:58866"/>
        <dbReference type="ChEBI" id="CHEBI:59776"/>
        <dbReference type="EC" id="4.2.1.20"/>
    </reaction>
</comment>
<comment type="cofactor">
    <cofactor evidence="1">
        <name>pyridoxal 5'-phosphate</name>
        <dbReference type="ChEBI" id="CHEBI:597326"/>
    </cofactor>
</comment>
<comment type="pathway">
    <text evidence="1">Amino-acid biosynthesis; L-tryptophan biosynthesis; L-tryptophan from chorismate: step 5/5.</text>
</comment>
<comment type="subunit">
    <text evidence="1">Tetramer of two alpha and two beta chains.</text>
</comment>
<comment type="similarity">
    <text evidence="1">Belongs to the TrpB family.</text>
</comment>
<reference key="1">
    <citation type="submission" date="2008-01" db="EMBL/GenBank/DDBJ databases">
        <title>Complete sequence of Shewanella halifaxensis HAW-EB4.</title>
        <authorList>
            <consortium name="US DOE Joint Genome Institute"/>
            <person name="Copeland A."/>
            <person name="Lucas S."/>
            <person name="Lapidus A."/>
            <person name="Glavina del Rio T."/>
            <person name="Dalin E."/>
            <person name="Tice H."/>
            <person name="Bruce D."/>
            <person name="Goodwin L."/>
            <person name="Pitluck S."/>
            <person name="Sims D."/>
            <person name="Brettin T."/>
            <person name="Detter J.C."/>
            <person name="Han C."/>
            <person name="Kuske C.R."/>
            <person name="Schmutz J."/>
            <person name="Larimer F."/>
            <person name="Land M."/>
            <person name="Hauser L."/>
            <person name="Kyrpides N."/>
            <person name="Kim E."/>
            <person name="Zhao J.-S."/>
            <person name="Richardson P."/>
        </authorList>
    </citation>
    <scope>NUCLEOTIDE SEQUENCE [LARGE SCALE GENOMIC DNA]</scope>
    <source>
        <strain>HAW-EB4</strain>
    </source>
</reference>
<sequence>MSKLNPYFGEYGGMYVPQILMPALKQLETAFIEAQEDEAFQEEFTDLLKNYAGRPTALTLTRNLSPNPLAKIYLKREDLLHGGAHKTNQVLGQALLAKRMGKKEIIAETGAGQHGVATALACALLGLKCRVYMGAKDVERQSPNVFRMKLMGAEVIPVTSGSATLKDACNEAMRDWSGCYDKAHYLLGTAAGPHPYPTIVREFQRMIGAETKRQILEREGRLPDAVIACVGGGSNAIGMFADFIDEPEVALIGVEPAGKGIDTPMHGAPLHHGKTGIFFGMKAPLMQDSEGQVEESYSVSAGLDFPSVGPQHAHLAAIGRATYESATDDEALETFQLLARCEGIIPALESAHAIAYAVKLAKEATKETLLVVNLSGRGDKDIFTVADILEQQKVEQQKVEQQKADNQNTEKNNQESGNE</sequence>
<name>TRPB_SHEHH</name>
<feature type="chain" id="PRO_1000076407" description="Tryptophan synthase beta chain">
    <location>
        <begin position="1"/>
        <end position="419"/>
    </location>
</feature>
<feature type="region of interest" description="Disordered" evidence="2">
    <location>
        <begin position="394"/>
        <end position="419"/>
    </location>
</feature>
<feature type="compositionally biased region" description="Basic and acidic residues" evidence="2">
    <location>
        <begin position="394"/>
        <end position="403"/>
    </location>
</feature>
<feature type="compositionally biased region" description="Polar residues" evidence="2">
    <location>
        <begin position="404"/>
        <end position="419"/>
    </location>
</feature>
<feature type="modified residue" description="N6-(pyridoxal phosphate)lysine" evidence="1">
    <location>
        <position position="86"/>
    </location>
</feature>
<protein>
    <recommendedName>
        <fullName evidence="1">Tryptophan synthase beta chain</fullName>
        <ecNumber evidence="1">4.2.1.20</ecNumber>
    </recommendedName>
</protein>
<gene>
    <name evidence="1" type="primary">trpB</name>
    <name type="ordered locus">Shal_1654</name>
</gene>
<accession>B0TP63</accession>